<proteinExistence type="inferred from homology"/>
<gene>
    <name evidence="3" type="primary">VicYb</name>
    <name type="ORF">COCVIDRAFT_116011</name>
</gene>
<protein>
    <recommendedName>
        <fullName evidence="3">UstYa family oxidase VicYb</fullName>
        <ecNumber evidence="5">1.-.-.-</ecNumber>
    </recommendedName>
    <alternativeName>
        <fullName evidence="3">Victorin biosynthesis cluster protein Yb</fullName>
    </alternativeName>
</protein>
<name>VICYB_BIPV3</name>
<organism>
    <name type="scientific">Bipolaris victoriae (strain FI3)</name>
    <name type="common">Victoria blight of oats agent</name>
    <name type="synonym">Cochliobolus victoriae</name>
    <dbReference type="NCBI Taxonomy" id="930091"/>
    <lineage>
        <taxon>Eukaryota</taxon>
        <taxon>Fungi</taxon>
        <taxon>Dikarya</taxon>
        <taxon>Ascomycota</taxon>
        <taxon>Pezizomycotina</taxon>
        <taxon>Dothideomycetes</taxon>
        <taxon>Pleosporomycetidae</taxon>
        <taxon>Pleosporales</taxon>
        <taxon>Pleosporineae</taxon>
        <taxon>Pleosporaceae</taxon>
        <taxon>Bipolaris</taxon>
    </lineage>
</organism>
<dbReference type="EC" id="1.-.-.-" evidence="5"/>
<dbReference type="EMBL" id="KI968914">
    <property type="protein sequence ID" value="EUN20664.1"/>
    <property type="molecule type" value="Genomic_DNA"/>
</dbReference>
<dbReference type="RefSeq" id="XP_014550238.1">
    <property type="nucleotide sequence ID" value="XM_014694752.1"/>
</dbReference>
<dbReference type="GeneID" id="26250845"/>
<dbReference type="HOGENOM" id="CLU_042941_7_2_1"/>
<dbReference type="Proteomes" id="UP000054337">
    <property type="component" value="Unassembled WGS sequence"/>
</dbReference>
<dbReference type="GO" id="GO:0016491">
    <property type="term" value="F:oxidoreductase activity"/>
    <property type="evidence" value="ECO:0007669"/>
    <property type="project" value="UniProtKB-KW"/>
</dbReference>
<dbReference type="GO" id="GO:0043386">
    <property type="term" value="P:mycotoxin biosynthetic process"/>
    <property type="evidence" value="ECO:0007669"/>
    <property type="project" value="InterPro"/>
</dbReference>
<dbReference type="InterPro" id="IPR021765">
    <property type="entry name" value="UstYa-like"/>
</dbReference>
<dbReference type="PANTHER" id="PTHR33365:SF4">
    <property type="entry name" value="CYCLOCHLOROTINE BIOSYNTHESIS PROTEIN O"/>
    <property type="match status" value="1"/>
</dbReference>
<dbReference type="PANTHER" id="PTHR33365">
    <property type="entry name" value="YALI0B05434P"/>
    <property type="match status" value="1"/>
</dbReference>
<dbReference type="Pfam" id="PF11807">
    <property type="entry name" value="UstYa"/>
    <property type="match status" value="1"/>
</dbReference>
<sequence length="112" mass="12865">HLVSLQVYHYLHCINALRRAAYQHVYGAPTKEHLNHLDHCIDMLRQAAQCQSDLTPMLYFNPENDPNTMLIKSHQHSCRRFDLVNEWAMARSQCKGNTTCAIEVGKQVGGEM</sequence>
<comment type="function">
    <text evidence="2 5">UstYa family oxidase, part of the gene cluster that mediates the biosynthesis of the secondary metabolite victorin, the molecular basis for Victoria blight of oats (PubMed:32929037). Within the pathway, vicYb catalyzes the oxidative cyclization of the core peptide (PubMed:32929037). The pathway starts with the processing of the precursor vicA1 by several endopeptidases including kexin proteases as well as the cluster-specific S28 family peptidases vicPa and vicPb to produce 7 identical copies of the hexapeptide Gly-Leu-Lys-Leu-Ala-Phe. After being excised from the precursor peptide, the core peptides are cyclized and modified post-translationally by enzymes encoded within the gene cluster. The ustYa family oxidase vicYb is required for the formation of the macrocycle in victorin and the copper amine oxidases (CAOs) vicK1 and vicK2 are responsible for converting victorin to the active form by oxidizing the N-terminal glycyl residue in the peptides to glyoxylate. Relaxed substrate specificity of enzymes in the victorin biosynthetic pathway results in a metabolic grid that produces a set of analogs including victorinines B, C, E or HV-toxin M (Probable).</text>
</comment>
<comment type="pathway">
    <text evidence="2">Mycotoxin biosynthesis.</text>
</comment>
<comment type="domain">
    <text evidence="1">The 2 HXXHC motifs are conserved in ustYa family proteins and might form active sites.</text>
</comment>
<comment type="disruption phenotype">
    <text evidence="2">Impairs the production of victorin or of any victorin derivative or intermediate.</text>
</comment>
<comment type="similarity">
    <text evidence="4">Belongs to the ustYa family.</text>
</comment>
<evidence type="ECO:0000250" key="1">
    <source>
        <dbReference type="UniProtKB" id="B8NM67"/>
    </source>
</evidence>
<evidence type="ECO:0000269" key="2">
    <source>
    </source>
</evidence>
<evidence type="ECO:0000303" key="3">
    <source>
    </source>
</evidence>
<evidence type="ECO:0000305" key="4"/>
<evidence type="ECO:0000305" key="5">
    <source>
    </source>
</evidence>
<feature type="chain" id="PRO_0000458343" description="UstYa family oxidase VicYb">
    <location>
        <begin position="1" status="less than"/>
        <end position="112"/>
    </location>
</feature>
<feature type="short sequence motif" description="HXXHC 1" evidence="1">
    <location>
        <begin position="9"/>
        <end position="13"/>
    </location>
</feature>
<feature type="short sequence motif" description="HXXHC 2" evidence="1">
    <location>
        <begin position="36"/>
        <end position="40"/>
    </location>
</feature>
<feature type="non-terminal residue" evidence="4">
    <location>
        <position position="1"/>
    </location>
</feature>
<reference key="1">
    <citation type="journal article" date="2013" name="PLoS Genet.">
        <title>Comparative genome structure, secondary metabolite, and effector coding capacity across Cochliobolus pathogens.</title>
        <authorList>
            <person name="Condon B.J."/>
            <person name="Leng Y."/>
            <person name="Wu D."/>
            <person name="Bushley K.E."/>
            <person name="Ohm R.A."/>
            <person name="Otillar R."/>
            <person name="Martin J."/>
            <person name="Schackwitz W."/>
            <person name="Grimwood J."/>
            <person name="MohdZainudin N."/>
            <person name="Xue C."/>
            <person name="Wang R."/>
            <person name="Manning V.A."/>
            <person name="Dhillon B."/>
            <person name="Tu Z.J."/>
            <person name="Steffenson B.J."/>
            <person name="Salamov A."/>
            <person name="Sun H."/>
            <person name="Lowry S."/>
            <person name="LaButti K."/>
            <person name="Han J."/>
            <person name="Copeland A."/>
            <person name="Lindquist E."/>
            <person name="Barry K."/>
            <person name="Schmutz J."/>
            <person name="Baker S.E."/>
            <person name="Ciuffetti L.M."/>
            <person name="Grigoriev I.V."/>
            <person name="Zhong S."/>
            <person name="Turgeon B.G."/>
        </authorList>
    </citation>
    <scope>NUCLEOTIDE SEQUENCE [LARGE SCALE GENOMIC DNA]</scope>
    <source>
        <strain>FI3</strain>
    </source>
</reference>
<reference key="2">
    <citation type="journal article" date="2020" name="Proc. Natl. Acad. Sci. U.S.A.">
        <title>Victorin, the host-selective cyclic peptide toxin from the oat pathogen Cochliobolus victoriae, is ribosomally encoded.</title>
        <authorList>
            <person name="Kessler S.C."/>
            <person name="Zhang X."/>
            <person name="McDonald M.C."/>
            <person name="Gilchrist C.L.M."/>
            <person name="Lin Z."/>
            <person name="Rightmyer A."/>
            <person name="Solomon P.S."/>
            <person name="Turgeon B.G."/>
            <person name="Chooi Y.H."/>
        </authorList>
    </citation>
    <scope>FUNCTION</scope>
    <scope>DISRUPTION PHENOTYPE</scope>
    <scope>PATHWAY</scope>
</reference>
<keyword id="KW-0560">Oxidoreductase</keyword>
<keyword id="KW-0843">Virulence</keyword>
<accession>W7E0Q5</accession>